<gene>
    <name evidence="1" type="primary">ileS</name>
</gene>
<dbReference type="EC" id="6.1.1.5" evidence="1"/>
<dbReference type="EMBL" id="AF516209">
    <property type="protein sequence ID" value="AAO65848.1"/>
    <property type="molecule type" value="Genomic_DNA"/>
</dbReference>
<dbReference type="SMR" id="Q846V6"/>
<dbReference type="GO" id="GO:0005829">
    <property type="term" value="C:cytosol"/>
    <property type="evidence" value="ECO:0007669"/>
    <property type="project" value="TreeGrafter"/>
</dbReference>
<dbReference type="GO" id="GO:0002161">
    <property type="term" value="F:aminoacyl-tRNA deacylase activity"/>
    <property type="evidence" value="ECO:0007669"/>
    <property type="project" value="InterPro"/>
</dbReference>
<dbReference type="GO" id="GO:0005524">
    <property type="term" value="F:ATP binding"/>
    <property type="evidence" value="ECO:0007669"/>
    <property type="project" value="UniProtKB-UniRule"/>
</dbReference>
<dbReference type="GO" id="GO:0004822">
    <property type="term" value="F:isoleucine-tRNA ligase activity"/>
    <property type="evidence" value="ECO:0007669"/>
    <property type="project" value="UniProtKB-UniRule"/>
</dbReference>
<dbReference type="GO" id="GO:0000049">
    <property type="term" value="F:tRNA binding"/>
    <property type="evidence" value="ECO:0007669"/>
    <property type="project" value="InterPro"/>
</dbReference>
<dbReference type="GO" id="GO:0006428">
    <property type="term" value="P:isoleucyl-tRNA aminoacylation"/>
    <property type="evidence" value="ECO:0007669"/>
    <property type="project" value="UniProtKB-UniRule"/>
</dbReference>
<dbReference type="CDD" id="cd07960">
    <property type="entry name" value="Anticodon_Ia_Ile_BEm"/>
    <property type="match status" value="1"/>
</dbReference>
<dbReference type="CDD" id="cd00818">
    <property type="entry name" value="IleRS_core"/>
    <property type="match status" value="1"/>
</dbReference>
<dbReference type="FunFam" id="1.10.10.830:FF:000001">
    <property type="entry name" value="Isoleucine--tRNA ligase"/>
    <property type="match status" value="1"/>
</dbReference>
<dbReference type="FunFam" id="3.40.50.620:FF:000152">
    <property type="entry name" value="Isoleucine--tRNA ligase"/>
    <property type="match status" value="1"/>
</dbReference>
<dbReference type="Gene3D" id="1.10.730.20">
    <property type="match status" value="1"/>
</dbReference>
<dbReference type="Gene3D" id="3.40.50.620">
    <property type="entry name" value="HUPs"/>
    <property type="match status" value="2"/>
</dbReference>
<dbReference type="Gene3D" id="1.10.10.830">
    <property type="entry name" value="Ile-tRNA synthetase CP2 domain-like"/>
    <property type="match status" value="1"/>
</dbReference>
<dbReference type="HAMAP" id="MF_02002">
    <property type="entry name" value="Ile_tRNA_synth_type1"/>
    <property type="match status" value="1"/>
</dbReference>
<dbReference type="InterPro" id="IPR001412">
    <property type="entry name" value="aa-tRNA-synth_I_CS"/>
</dbReference>
<dbReference type="InterPro" id="IPR002300">
    <property type="entry name" value="aa-tRNA-synth_Ia"/>
</dbReference>
<dbReference type="InterPro" id="IPR033708">
    <property type="entry name" value="Anticodon_Ile_BEm"/>
</dbReference>
<dbReference type="InterPro" id="IPR002301">
    <property type="entry name" value="Ile-tRNA-ligase"/>
</dbReference>
<dbReference type="InterPro" id="IPR023585">
    <property type="entry name" value="Ile-tRNA-ligase_type1"/>
</dbReference>
<dbReference type="InterPro" id="IPR050081">
    <property type="entry name" value="Ile-tRNA_ligase"/>
</dbReference>
<dbReference type="InterPro" id="IPR013155">
    <property type="entry name" value="M/V/L/I-tRNA-synth_anticd-bd"/>
</dbReference>
<dbReference type="InterPro" id="IPR014729">
    <property type="entry name" value="Rossmann-like_a/b/a_fold"/>
</dbReference>
<dbReference type="InterPro" id="IPR009080">
    <property type="entry name" value="tRNAsynth_Ia_anticodon-bd"/>
</dbReference>
<dbReference type="InterPro" id="IPR009008">
    <property type="entry name" value="Val/Leu/Ile-tRNA-synth_edit"/>
</dbReference>
<dbReference type="NCBIfam" id="TIGR00392">
    <property type="entry name" value="ileS"/>
    <property type="match status" value="1"/>
</dbReference>
<dbReference type="PANTHER" id="PTHR42765:SF1">
    <property type="entry name" value="ISOLEUCINE--TRNA LIGASE, MITOCHONDRIAL"/>
    <property type="match status" value="1"/>
</dbReference>
<dbReference type="PANTHER" id="PTHR42765">
    <property type="entry name" value="SOLEUCYL-TRNA SYNTHETASE"/>
    <property type="match status" value="1"/>
</dbReference>
<dbReference type="Pfam" id="PF08264">
    <property type="entry name" value="Anticodon_1"/>
    <property type="match status" value="1"/>
</dbReference>
<dbReference type="Pfam" id="PF00133">
    <property type="entry name" value="tRNA-synt_1"/>
    <property type="match status" value="1"/>
</dbReference>
<dbReference type="PRINTS" id="PR00984">
    <property type="entry name" value="TRNASYNTHILE"/>
</dbReference>
<dbReference type="SUPFAM" id="SSF47323">
    <property type="entry name" value="Anticodon-binding domain of a subclass of class I aminoacyl-tRNA synthetases"/>
    <property type="match status" value="1"/>
</dbReference>
<dbReference type="SUPFAM" id="SSF52374">
    <property type="entry name" value="Nucleotidylyl transferase"/>
    <property type="match status" value="1"/>
</dbReference>
<dbReference type="SUPFAM" id="SSF50677">
    <property type="entry name" value="ValRS/IleRS/LeuRS editing domain"/>
    <property type="match status" value="1"/>
</dbReference>
<dbReference type="PROSITE" id="PS00178">
    <property type="entry name" value="AA_TRNA_LIGASE_I"/>
    <property type="match status" value="1"/>
</dbReference>
<proteinExistence type="inferred from homology"/>
<comment type="function">
    <text evidence="1">Catalyzes the attachment of isoleucine to tRNA(Ile). As IleRS can inadvertently accommodate and process structurally similar amino acids such as valine, to avoid such errors it has two additional distinct tRNA(Ile)-dependent editing activities. One activity is designated as 'pretransfer' editing and involves the hydrolysis of activated Val-AMP. The other activity is designated 'posttransfer' editing and involves deacylation of mischarged Val-tRNA(Ile).</text>
</comment>
<comment type="catalytic activity">
    <reaction evidence="1">
        <text>tRNA(Ile) + L-isoleucine + ATP = L-isoleucyl-tRNA(Ile) + AMP + diphosphate</text>
        <dbReference type="Rhea" id="RHEA:11060"/>
        <dbReference type="Rhea" id="RHEA-COMP:9666"/>
        <dbReference type="Rhea" id="RHEA-COMP:9695"/>
        <dbReference type="ChEBI" id="CHEBI:30616"/>
        <dbReference type="ChEBI" id="CHEBI:33019"/>
        <dbReference type="ChEBI" id="CHEBI:58045"/>
        <dbReference type="ChEBI" id="CHEBI:78442"/>
        <dbReference type="ChEBI" id="CHEBI:78528"/>
        <dbReference type="ChEBI" id="CHEBI:456215"/>
        <dbReference type="EC" id="6.1.1.5"/>
    </reaction>
</comment>
<comment type="subunit">
    <text evidence="1">Monomer.</text>
</comment>
<comment type="subcellular location">
    <subcellularLocation>
        <location evidence="1">Cytoplasm</location>
    </subcellularLocation>
</comment>
<comment type="domain">
    <text evidence="1">IleRS has two distinct active sites: one for aminoacylation and one for editing. The misactivated valine is translocated from the active site to the editing site, which sterically excludes the correctly activated isoleucine. The single editing site contains two valyl binding pockets, one specific for each substrate (Val-AMP or Val-tRNA(Ile)).</text>
</comment>
<comment type="similarity">
    <text evidence="1">Belongs to the class-I aminoacyl-tRNA synthetase family. IleS type 1 subfamily.</text>
</comment>
<sequence length="871" mass="100134">MNYKDTLLMPKTDFPMRGGLPNKEPQIQEMWDNDDQYRKALEKNKNNPSFILHDGPPYANGNLHMGHALNKIIKDFIVRYKTMQGFYAPYVPGWDTHGLPIEQALTKKGVDRKKMSVAEFREKCKEFALKQIDIQKKDFKRLGVRGDFNNPYITLTPEYEAAQIRLFGEMADKGLIYKGKKPVYWSPSSESSLAEAEIEYHDKRSASIYVAFDVKDSKGKVDSDAQFIIWTTTPWTIPSNVAITVHPELKYGQYNVDGHKYIVAQALSEEVAEALGWDKDSIQLEKEFTGKELEFVEAQHPFLDRVSLVINGEHVTTDAGTGCVHTAPGHGEDDYIVGQKYDLPVISPLNDKGVFTEEGGPFEGMFYDKANKAVTDLLKEKDALLKLDFITHSYPHDWRTKKPVIFRATPQWFASINKVKQDILDAIEDTNFKVDWGKTRIYNMIRDRGEWVISRQRVWGVPLPVFYAENGDIIMTKETVNHVADLFEKYGSNIWFEKEAKELLPEGFSHPGSPNGEFTKETDIMDVWFDSGSSHRGVLETRPELSFPADLYFEGSDQYRGWFNSSITTAVATRGQAPYKFLLSHGFVMDGEGKKMSKSLGNVIVPDQVVKQKGADIARLWVSSTDYLSDVRISDEILKKTSDVYRKIRNTLRFMLGNINDFNPETDSIAETNLLEVDRYLLNRLREFTASTINNYENFDYLNIYQEVQNFINVELSNFYLDYGKDILYIEKKDSHKRRSMQTVLYQILIDMTKLLAPILVHTAEEVWSHTPHVKEESVHLSDMPKVVDVDEELLEKWNTFMNLRDDVNRALEQARNEKVIGKSLEAKVVIGNNETFNTAEFLQQFNDLQQLFIVSQVEVKDKVKLKILIR</sequence>
<keyword id="KW-0030">Aminoacyl-tRNA synthetase</keyword>
<keyword id="KW-0067">ATP-binding</keyword>
<keyword id="KW-0963">Cytoplasm</keyword>
<keyword id="KW-0436">Ligase</keyword>
<keyword id="KW-0547">Nucleotide-binding</keyword>
<keyword id="KW-0648">Protein biosynthesis</keyword>
<evidence type="ECO:0000255" key="1">
    <source>
        <dbReference type="HAMAP-Rule" id="MF_02002"/>
    </source>
</evidence>
<accession>Q846V6</accession>
<name>SYI_STAEP</name>
<reference key="1">
    <citation type="journal article" date="2003" name="J. Antimicrob. Chemother.">
        <title>Prevalence and mechanisms of low- and high-level mupirocin resistance in staphylococci isolated from a Korean hospital.</title>
        <authorList>
            <person name="Yun H.J."/>
            <person name="Lee S.W."/>
            <person name="Yoon G.M."/>
            <person name="Kim S.Y."/>
            <person name="Choi S."/>
            <person name="Lee Y.S."/>
            <person name="Choi E.C."/>
            <person name="Kim S."/>
        </authorList>
    </citation>
    <scope>NUCLEOTIDE SEQUENCE [GENOMIC DNA]</scope>
</reference>
<organism>
    <name type="scientific">Staphylococcus epidermidis</name>
    <dbReference type="NCBI Taxonomy" id="1282"/>
    <lineage>
        <taxon>Bacteria</taxon>
        <taxon>Bacillati</taxon>
        <taxon>Bacillota</taxon>
        <taxon>Bacilli</taxon>
        <taxon>Bacillales</taxon>
        <taxon>Staphylococcaceae</taxon>
        <taxon>Staphylococcus</taxon>
    </lineage>
</organism>
<protein>
    <recommendedName>
        <fullName evidence="1">Isoleucine--tRNA ligase</fullName>
        <ecNumber evidence="1">6.1.1.5</ecNumber>
    </recommendedName>
    <alternativeName>
        <fullName evidence="1">Isoleucyl-tRNA synthetase</fullName>
        <shortName evidence="1">IleRS</shortName>
    </alternativeName>
</protein>
<feature type="chain" id="PRO_0000098470" description="Isoleucine--tRNA ligase">
    <location>
        <begin position="1"/>
        <end position="871"/>
    </location>
</feature>
<feature type="short sequence motif" description="'HIGH' region">
    <location>
        <begin position="57"/>
        <end position="67"/>
    </location>
</feature>
<feature type="short sequence motif" description="'KMSKS' region">
    <location>
        <begin position="595"/>
        <end position="599"/>
    </location>
</feature>
<feature type="binding site" evidence="1">
    <location>
        <position position="554"/>
    </location>
    <ligand>
        <name>L-isoleucyl-5'-AMP</name>
        <dbReference type="ChEBI" id="CHEBI:178002"/>
    </ligand>
</feature>
<feature type="binding site" evidence="1">
    <location>
        <position position="598"/>
    </location>
    <ligand>
        <name>ATP</name>
        <dbReference type="ChEBI" id="CHEBI:30616"/>
    </ligand>
</feature>